<accession>Q28R34</accession>
<gene>
    <name type="ordered locus">Jann_1911</name>
</gene>
<feature type="chain" id="PRO_0000255803" description="Putative glutamate--cysteine ligase 2">
    <location>
        <begin position="1"/>
        <end position="378"/>
    </location>
</feature>
<proteinExistence type="inferred from homology"/>
<comment type="function">
    <text evidence="1">ATP-dependent carboxylate-amine ligase which exhibits weak glutamate--cysteine ligase activity.</text>
</comment>
<comment type="catalytic activity">
    <reaction evidence="1">
        <text>L-cysteine + L-glutamate + ATP = gamma-L-glutamyl-L-cysteine + ADP + phosphate + H(+)</text>
        <dbReference type="Rhea" id="RHEA:13285"/>
        <dbReference type="ChEBI" id="CHEBI:15378"/>
        <dbReference type="ChEBI" id="CHEBI:29985"/>
        <dbReference type="ChEBI" id="CHEBI:30616"/>
        <dbReference type="ChEBI" id="CHEBI:35235"/>
        <dbReference type="ChEBI" id="CHEBI:43474"/>
        <dbReference type="ChEBI" id="CHEBI:58173"/>
        <dbReference type="ChEBI" id="CHEBI:456216"/>
        <dbReference type="EC" id="6.3.2.2"/>
    </reaction>
</comment>
<comment type="similarity">
    <text evidence="1">Belongs to the glutamate--cysteine ligase type 2 family. YbdK subfamily.</text>
</comment>
<reference key="1">
    <citation type="submission" date="2006-02" db="EMBL/GenBank/DDBJ databases">
        <title>Complete sequence of chromosome of Jannaschia sp. CCS1.</title>
        <authorList>
            <consortium name="US DOE Joint Genome Institute"/>
            <person name="Copeland A."/>
            <person name="Lucas S."/>
            <person name="Lapidus A."/>
            <person name="Barry K."/>
            <person name="Detter J.C."/>
            <person name="Glavina del Rio T."/>
            <person name="Hammon N."/>
            <person name="Israni S."/>
            <person name="Pitluck S."/>
            <person name="Brettin T."/>
            <person name="Bruce D."/>
            <person name="Han C."/>
            <person name="Tapia R."/>
            <person name="Gilna P."/>
            <person name="Chertkov O."/>
            <person name="Saunders E."/>
            <person name="Schmutz J."/>
            <person name="Larimer F."/>
            <person name="Land M."/>
            <person name="Kyrpides N."/>
            <person name="Lykidis A."/>
            <person name="Moran M.A."/>
            <person name="Belas R."/>
            <person name="Ye W."/>
            <person name="Buchan A."/>
            <person name="Gonzalez J.M."/>
            <person name="Schell M.A."/>
            <person name="Richardson P."/>
        </authorList>
    </citation>
    <scope>NUCLEOTIDE SEQUENCE [LARGE SCALE GENOMIC DNA]</scope>
    <source>
        <strain>CCS1</strain>
    </source>
</reference>
<keyword id="KW-0067">ATP-binding</keyword>
<keyword id="KW-0436">Ligase</keyword>
<keyword id="KW-0547">Nucleotide-binding</keyword>
<keyword id="KW-1185">Reference proteome</keyword>
<protein>
    <recommendedName>
        <fullName evidence="1">Putative glutamate--cysteine ligase 2</fullName>
        <ecNumber evidence="1">6.3.2.2</ecNumber>
    </recommendedName>
    <alternativeName>
        <fullName evidence="1">Gamma-glutamylcysteine synthetase 2</fullName>
        <shortName evidence="1">GCS 2</shortName>
        <shortName evidence="1">Gamma-GCS 2</shortName>
    </alternativeName>
</protein>
<name>GCS2_JANSC</name>
<dbReference type="EC" id="6.3.2.2" evidence="1"/>
<dbReference type="EMBL" id="CP000264">
    <property type="protein sequence ID" value="ABD54828.1"/>
    <property type="molecule type" value="Genomic_DNA"/>
</dbReference>
<dbReference type="RefSeq" id="WP_011455033.1">
    <property type="nucleotide sequence ID" value="NC_007802.1"/>
</dbReference>
<dbReference type="SMR" id="Q28R34"/>
<dbReference type="STRING" id="290400.Jann_1911"/>
<dbReference type="KEGG" id="jan:Jann_1911"/>
<dbReference type="eggNOG" id="COG2170">
    <property type="taxonomic scope" value="Bacteria"/>
</dbReference>
<dbReference type="HOGENOM" id="CLU_044848_1_0_5"/>
<dbReference type="OrthoDB" id="9769628at2"/>
<dbReference type="Proteomes" id="UP000008326">
    <property type="component" value="Chromosome"/>
</dbReference>
<dbReference type="GO" id="GO:0005524">
    <property type="term" value="F:ATP binding"/>
    <property type="evidence" value="ECO:0007669"/>
    <property type="project" value="UniProtKB-KW"/>
</dbReference>
<dbReference type="GO" id="GO:0004357">
    <property type="term" value="F:glutamate-cysteine ligase activity"/>
    <property type="evidence" value="ECO:0007669"/>
    <property type="project" value="UniProtKB-EC"/>
</dbReference>
<dbReference type="GO" id="GO:0042398">
    <property type="term" value="P:modified amino acid biosynthetic process"/>
    <property type="evidence" value="ECO:0007669"/>
    <property type="project" value="InterPro"/>
</dbReference>
<dbReference type="Gene3D" id="3.30.590.20">
    <property type="match status" value="1"/>
</dbReference>
<dbReference type="HAMAP" id="MF_01609">
    <property type="entry name" value="Glu_cys_ligase_2"/>
    <property type="match status" value="1"/>
</dbReference>
<dbReference type="InterPro" id="IPR050141">
    <property type="entry name" value="GCL_type2/YbdK_subfam"/>
</dbReference>
<dbReference type="InterPro" id="IPR006336">
    <property type="entry name" value="GCS2"/>
</dbReference>
<dbReference type="InterPro" id="IPR014746">
    <property type="entry name" value="Gln_synth/guanido_kin_cat_dom"/>
</dbReference>
<dbReference type="InterPro" id="IPR011793">
    <property type="entry name" value="YbdK"/>
</dbReference>
<dbReference type="NCBIfam" id="TIGR02050">
    <property type="entry name" value="gshA_cyan_rel"/>
    <property type="match status" value="1"/>
</dbReference>
<dbReference type="NCBIfam" id="NF010039">
    <property type="entry name" value="PRK13515.1"/>
    <property type="match status" value="1"/>
</dbReference>
<dbReference type="PANTHER" id="PTHR36510">
    <property type="entry name" value="GLUTAMATE--CYSTEINE LIGASE 2-RELATED"/>
    <property type="match status" value="1"/>
</dbReference>
<dbReference type="PANTHER" id="PTHR36510:SF1">
    <property type="entry name" value="GLUTAMATE--CYSTEINE LIGASE 2-RELATED"/>
    <property type="match status" value="1"/>
</dbReference>
<dbReference type="Pfam" id="PF04107">
    <property type="entry name" value="GCS2"/>
    <property type="match status" value="1"/>
</dbReference>
<dbReference type="SUPFAM" id="SSF55931">
    <property type="entry name" value="Glutamine synthetase/guanido kinase"/>
    <property type="match status" value="1"/>
</dbReference>
<evidence type="ECO:0000255" key="1">
    <source>
        <dbReference type="HAMAP-Rule" id="MF_01609"/>
    </source>
</evidence>
<organism>
    <name type="scientific">Jannaschia sp. (strain CCS1)</name>
    <dbReference type="NCBI Taxonomy" id="290400"/>
    <lineage>
        <taxon>Bacteria</taxon>
        <taxon>Pseudomonadati</taxon>
        <taxon>Pseudomonadota</taxon>
        <taxon>Alphaproteobacteria</taxon>
        <taxon>Rhodobacterales</taxon>
        <taxon>Roseobacteraceae</taxon>
        <taxon>Jannaschia</taxon>
    </lineage>
</organism>
<sequence length="378" mass="42506">MAQTFSDEHFTLGIEEEYLLVDAETYDLAEAPDALMAACADKLSSKVSPEFLQCQIEVGTGVCASIADARADLRNLRATVAECAGRFGLAPIAVSCHPFADWKDQSHTDKDRYNQLARDLGGVVERMLICGAHCHVGLPSENDRVDIMRQMTYFLPHLLALSTSSPFWQGRDTGLASYRLTVFDNLPRTGLPPSFASFDEFQRTVDLLVDMEMIEDSSKIWWDLRPSAAFPTLETRICDVSPRLEDQLSLSALIQCLTRMLMRLRGSNQRWRVYDRFLINENRWRAQRYGVSDGLIDFGRGAVVPLPELVDELIELTEQDAEALGCVDEVQRLRDLAVETSSDRQRKIYKGTRAAGGSHQAAMRSVVEHLLEDFHVDL</sequence>